<accession>Q8NV80</accession>
<feature type="chain" id="PRO_0000312188" description="Putative 2-hydroxyacid dehydrogenase MW2224">
    <location>
        <begin position="1"/>
        <end position="317"/>
    </location>
</feature>
<feature type="active site" evidence="1">
    <location>
        <position position="236"/>
    </location>
</feature>
<feature type="active site" evidence="1">
    <location>
        <position position="265"/>
    </location>
</feature>
<feature type="active site" description="Proton donor" evidence="1">
    <location>
        <position position="283"/>
    </location>
</feature>
<feature type="binding site" evidence="1">
    <location>
        <begin position="155"/>
        <end position="156"/>
    </location>
    <ligand>
        <name>NAD(+)</name>
        <dbReference type="ChEBI" id="CHEBI:57540"/>
    </ligand>
</feature>
<feature type="binding site" evidence="1">
    <location>
        <begin position="234"/>
        <end position="236"/>
    </location>
    <ligand>
        <name>NAD(+)</name>
        <dbReference type="ChEBI" id="CHEBI:57540"/>
    </ligand>
</feature>
<feature type="binding site" evidence="1">
    <location>
        <position position="260"/>
    </location>
    <ligand>
        <name>NAD(+)</name>
        <dbReference type="ChEBI" id="CHEBI:57540"/>
    </ligand>
</feature>
<feature type="binding site" evidence="1">
    <location>
        <begin position="283"/>
        <end position="286"/>
    </location>
    <ligand>
        <name>NAD(+)</name>
        <dbReference type="ChEBI" id="CHEBI:57540"/>
    </ligand>
</feature>
<keyword id="KW-0520">NAD</keyword>
<keyword id="KW-0560">Oxidoreductase</keyword>
<proteinExistence type="inferred from homology"/>
<reference key="1">
    <citation type="journal article" date="2002" name="Lancet">
        <title>Genome and virulence determinants of high virulence community-acquired MRSA.</title>
        <authorList>
            <person name="Baba T."/>
            <person name="Takeuchi F."/>
            <person name="Kuroda M."/>
            <person name="Yuzawa H."/>
            <person name="Aoki K."/>
            <person name="Oguchi A."/>
            <person name="Nagai Y."/>
            <person name="Iwama N."/>
            <person name="Asano K."/>
            <person name="Naimi T."/>
            <person name="Kuroda H."/>
            <person name="Cui L."/>
            <person name="Yamamoto K."/>
            <person name="Hiramatsu K."/>
        </authorList>
    </citation>
    <scope>NUCLEOTIDE SEQUENCE [LARGE SCALE GENOMIC DNA]</scope>
    <source>
        <strain>MW2</strain>
    </source>
</reference>
<protein>
    <recommendedName>
        <fullName>Putative 2-hydroxyacid dehydrogenase MW2224</fullName>
        <ecNumber>1.1.1.-</ecNumber>
    </recommendedName>
</protein>
<sequence length="317" mass="34675">MEKVYVAGAIPEVGLKLLQEHFEVEMYEGKGLVDKDTLIKGVKNATALISLLSTNVDKDVIDAGKDLKIIANYGAGFNNIDIEYAREKSIDVTNTPKASTNATADLTIGLVLAVARRIVEGDQLSRTTGFDGWAPLFFRGREVSGKTIGIIGLGEIGSAVARRARAFDMDVLYTGPNRKEEKEREIGAKYVDLDTLLKNADFITINAAYNPKMHHLIDTEQFKMMKSTAYLINASRGPIVHEQALVQALKDNEIEGAALDVYEFEPDITDDLKSLNNVVLTPHIGNATFEARDMMSKIVANAAISAVQGEKPQFVVN</sequence>
<organism>
    <name type="scientific">Staphylococcus aureus (strain MW2)</name>
    <dbReference type="NCBI Taxonomy" id="196620"/>
    <lineage>
        <taxon>Bacteria</taxon>
        <taxon>Bacillati</taxon>
        <taxon>Bacillota</taxon>
        <taxon>Bacilli</taxon>
        <taxon>Bacillales</taxon>
        <taxon>Staphylococcaceae</taxon>
        <taxon>Staphylococcus</taxon>
    </lineage>
</organism>
<gene>
    <name type="ordered locus">MW2224</name>
</gene>
<name>Y2224_STAAW</name>
<evidence type="ECO:0000250" key="1"/>
<evidence type="ECO:0000305" key="2"/>
<dbReference type="EC" id="1.1.1.-"/>
<dbReference type="EMBL" id="BA000033">
    <property type="protein sequence ID" value="BAB96089.1"/>
    <property type="molecule type" value="Genomic_DNA"/>
</dbReference>
<dbReference type="RefSeq" id="WP_000417016.1">
    <property type="nucleotide sequence ID" value="NC_003923.1"/>
</dbReference>
<dbReference type="SMR" id="Q8NV80"/>
<dbReference type="KEGG" id="sam:MW2224"/>
<dbReference type="HOGENOM" id="CLU_019796_1_2_9"/>
<dbReference type="GO" id="GO:0051287">
    <property type="term" value="F:NAD binding"/>
    <property type="evidence" value="ECO:0007669"/>
    <property type="project" value="InterPro"/>
</dbReference>
<dbReference type="GO" id="GO:0016616">
    <property type="term" value="F:oxidoreductase activity, acting on the CH-OH group of donors, NAD or NADP as acceptor"/>
    <property type="evidence" value="ECO:0007669"/>
    <property type="project" value="InterPro"/>
</dbReference>
<dbReference type="CDD" id="cd12178">
    <property type="entry name" value="2-Hacid_dh_13"/>
    <property type="match status" value="1"/>
</dbReference>
<dbReference type="FunFam" id="3.40.50.720:FF:000462">
    <property type="entry name" value="Glyoxylate reductase (NADP+)"/>
    <property type="match status" value="1"/>
</dbReference>
<dbReference type="Gene3D" id="3.40.50.720">
    <property type="entry name" value="NAD(P)-binding Rossmann-like Domain"/>
    <property type="match status" value="2"/>
</dbReference>
<dbReference type="InterPro" id="IPR050857">
    <property type="entry name" value="D-2-hydroxyacid_DH"/>
</dbReference>
<dbReference type="InterPro" id="IPR006139">
    <property type="entry name" value="D-isomer_2_OHA_DH_cat_dom"/>
</dbReference>
<dbReference type="InterPro" id="IPR006140">
    <property type="entry name" value="D-isomer_DH_NAD-bd"/>
</dbReference>
<dbReference type="InterPro" id="IPR036291">
    <property type="entry name" value="NAD(P)-bd_dom_sf"/>
</dbReference>
<dbReference type="PANTHER" id="PTHR42789">
    <property type="entry name" value="D-ISOMER SPECIFIC 2-HYDROXYACID DEHYDROGENASE FAMILY PROTEIN (AFU_ORTHOLOGUE AFUA_6G10090)"/>
    <property type="match status" value="1"/>
</dbReference>
<dbReference type="PANTHER" id="PTHR42789:SF1">
    <property type="entry name" value="D-ISOMER SPECIFIC 2-HYDROXYACID DEHYDROGENASE FAMILY PROTEIN (AFU_ORTHOLOGUE AFUA_6G10090)"/>
    <property type="match status" value="1"/>
</dbReference>
<dbReference type="Pfam" id="PF00389">
    <property type="entry name" value="2-Hacid_dh"/>
    <property type="match status" value="1"/>
</dbReference>
<dbReference type="Pfam" id="PF02826">
    <property type="entry name" value="2-Hacid_dh_C"/>
    <property type="match status" value="1"/>
</dbReference>
<dbReference type="SUPFAM" id="SSF52283">
    <property type="entry name" value="Formate/glycerate dehydrogenase catalytic domain-like"/>
    <property type="match status" value="1"/>
</dbReference>
<dbReference type="SUPFAM" id="SSF51735">
    <property type="entry name" value="NAD(P)-binding Rossmann-fold domains"/>
    <property type="match status" value="1"/>
</dbReference>
<comment type="similarity">
    <text evidence="2">Belongs to the D-isomer specific 2-hydroxyacid dehydrogenase family.</text>
</comment>